<keyword id="KW-0004">4Fe-4S</keyword>
<keyword id="KW-0028">Amino-acid biosynthesis</keyword>
<keyword id="KW-0100">Branched-chain amino acid biosynthesis</keyword>
<keyword id="KW-0408">Iron</keyword>
<keyword id="KW-0411">Iron-sulfur</keyword>
<keyword id="KW-0432">Leucine biosynthesis</keyword>
<keyword id="KW-0456">Lyase</keyword>
<keyword id="KW-0479">Metal-binding</keyword>
<keyword id="KW-0614">Plasmid</keyword>
<reference key="1">
    <citation type="journal article" date="2001" name="J. Bacteriol.">
        <title>Vertical transmission of biosynthetic plasmids in aphid endosymbionts (Buchnera).</title>
        <authorList>
            <person name="Wernegreen J.J."/>
            <person name="Moran N.A."/>
        </authorList>
    </citation>
    <scope>NUCLEOTIDE SEQUENCE [GENOMIC DNA]</scope>
</reference>
<dbReference type="EC" id="4.2.1.33" evidence="1"/>
<dbReference type="EMBL" id="AF197451">
    <property type="protein sequence ID" value="AAG31388.1"/>
    <property type="molecule type" value="Genomic_DNA"/>
</dbReference>
<dbReference type="UniPathway" id="UPA00048">
    <property type="reaction ID" value="UER00071"/>
</dbReference>
<dbReference type="GO" id="GO:0003861">
    <property type="term" value="F:3-isopropylmalate dehydratase activity"/>
    <property type="evidence" value="ECO:0007669"/>
    <property type="project" value="UniProtKB-EC"/>
</dbReference>
<dbReference type="GO" id="GO:0051539">
    <property type="term" value="F:4 iron, 4 sulfur cluster binding"/>
    <property type="evidence" value="ECO:0007669"/>
    <property type="project" value="UniProtKB-KW"/>
</dbReference>
<dbReference type="GO" id="GO:0046872">
    <property type="term" value="F:metal ion binding"/>
    <property type="evidence" value="ECO:0007669"/>
    <property type="project" value="UniProtKB-KW"/>
</dbReference>
<dbReference type="GO" id="GO:0009098">
    <property type="term" value="P:L-leucine biosynthetic process"/>
    <property type="evidence" value="ECO:0007669"/>
    <property type="project" value="UniProtKB-UniPathway"/>
</dbReference>
<dbReference type="CDD" id="cd01583">
    <property type="entry name" value="IPMI"/>
    <property type="match status" value="1"/>
</dbReference>
<dbReference type="Gene3D" id="3.30.499.10">
    <property type="entry name" value="Aconitase, domain 3"/>
    <property type="match status" value="2"/>
</dbReference>
<dbReference type="HAMAP" id="MF_01026">
    <property type="entry name" value="LeuC_type1"/>
    <property type="match status" value="1"/>
</dbReference>
<dbReference type="InterPro" id="IPR004430">
    <property type="entry name" value="3-IsopropMal_deHydase_lsu"/>
</dbReference>
<dbReference type="InterPro" id="IPR015931">
    <property type="entry name" value="Acnase/IPM_dHydase_lsu_aba_1/3"/>
</dbReference>
<dbReference type="InterPro" id="IPR001030">
    <property type="entry name" value="Acoase/IPM_deHydtase_lsu_aba"/>
</dbReference>
<dbReference type="InterPro" id="IPR018136">
    <property type="entry name" value="Aconitase_4Fe-4S_BS"/>
</dbReference>
<dbReference type="InterPro" id="IPR036008">
    <property type="entry name" value="Aconitase_4Fe-4S_dom"/>
</dbReference>
<dbReference type="InterPro" id="IPR050067">
    <property type="entry name" value="IPM_dehydratase_rel_enz"/>
</dbReference>
<dbReference type="InterPro" id="IPR033941">
    <property type="entry name" value="IPMI_cat"/>
</dbReference>
<dbReference type="NCBIfam" id="TIGR00170">
    <property type="entry name" value="leuC"/>
    <property type="match status" value="1"/>
</dbReference>
<dbReference type="NCBIfam" id="NF004016">
    <property type="entry name" value="PRK05478.1"/>
    <property type="match status" value="1"/>
</dbReference>
<dbReference type="NCBIfam" id="NF009116">
    <property type="entry name" value="PRK12466.1"/>
    <property type="match status" value="1"/>
</dbReference>
<dbReference type="PANTHER" id="PTHR43822:SF9">
    <property type="entry name" value="3-ISOPROPYLMALATE DEHYDRATASE"/>
    <property type="match status" value="1"/>
</dbReference>
<dbReference type="PANTHER" id="PTHR43822">
    <property type="entry name" value="HOMOACONITASE, MITOCHONDRIAL-RELATED"/>
    <property type="match status" value="1"/>
</dbReference>
<dbReference type="Pfam" id="PF00330">
    <property type="entry name" value="Aconitase"/>
    <property type="match status" value="1"/>
</dbReference>
<dbReference type="PRINTS" id="PR00415">
    <property type="entry name" value="ACONITASE"/>
</dbReference>
<dbReference type="SUPFAM" id="SSF53732">
    <property type="entry name" value="Aconitase iron-sulfur domain"/>
    <property type="match status" value="1"/>
</dbReference>
<dbReference type="PROSITE" id="PS00450">
    <property type="entry name" value="ACONITASE_1"/>
    <property type="match status" value="1"/>
</dbReference>
<dbReference type="PROSITE" id="PS01244">
    <property type="entry name" value="ACONITASE_2"/>
    <property type="match status" value="1"/>
</dbReference>
<proteinExistence type="inferred from homology"/>
<protein>
    <recommendedName>
        <fullName evidence="1">3-isopropylmalate dehydratase large subunit</fullName>
        <ecNumber evidence="1">4.2.1.33</ecNumber>
    </recommendedName>
    <alternativeName>
        <fullName evidence="1">Alpha-IPM isomerase</fullName>
        <shortName evidence="1">IPMI</shortName>
    </alternativeName>
    <alternativeName>
        <fullName evidence="1">Isopropylmalate isomerase</fullName>
    </alternativeName>
</protein>
<gene>
    <name evidence="1" type="primary">leuC</name>
</gene>
<organism>
    <name type="scientific">Buchnera aphidicola subsp. Uroleucon helianthicola</name>
    <dbReference type="NCBI Taxonomy" id="118115"/>
    <lineage>
        <taxon>Bacteria</taxon>
        <taxon>Pseudomonadati</taxon>
        <taxon>Pseudomonadota</taxon>
        <taxon>Gammaproteobacteria</taxon>
        <taxon>Enterobacterales</taxon>
        <taxon>Erwiniaceae</taxon>
        <taxon>Buchnera</taxon>
    </lineage>
</organism>
<feature type="chain" id="PRO_0000076726" description="3-isopropylmalate dehydratase large subunit">
    <location>
        <begin position="1"/>
        <end position="442" status="greater than"/>
    </location>
</feature>
<feature type="binding site" evidence="1">
    <location>
        <position position="347"/>
    </location>
    <ligand>
        <name>[4Fe-4S] cluster</name>
        <dbReference type="ChEBI" id="CHEBI:49883"/>
    </ligand>
</feature>
<feature type="binding site" evidence="1">
    <location>
        <position position="407"/>
    </location>
    <ligand>
        <name>[4Fe-4S] cluster</name>
        <dbReference type="ChEBI" id="CHEBI:49883"/>
    </ligand>
</feature>
<feature type="binding site" evidence="1">
    <location>
        <position position="410"/>
    </location>
    <ligand>
        <name>[4Fe-4S] cluster</name>
        <dbReference type="ChEBI" id="CHEBI:49883"/>
    </ligand>
</feature>
<feature type="non-terminal residue">
    <location>
        <position position="442"/>
    </location>
</feature>
<evidence type="ECO:0000255" key="1">
    <source>
        <dbReference type="HAMAP-Rule" id="MF_01026"/>
    </source>
</evidence>
<geneLocation type="plasmid">
    <name>pLeu</name>
    <name>pBAp1</name>
</geneLocation>
<comment type="function">
    <text evidence="1">Catalyzes the isomerization between 2-isopropylmalate and 3-isopropylmalate, via the formation of 2-isopropylmaleate.</text>
</comment>
<comment type="catalytic activity">
    <reaction evidence="1">
        <text>(2R,3S)-3-isopropylmalate = (2S)-2-isopropylmalate</text>
        <dbReference type="Rhea" id="RHEA:32287"/>
        <dbReference type="ChEBI" id="CHEBI:1178"/>
        <dbReference type="ChEBI" id="CHEBI:35121"/>
        <dbReference type="EC" id="4.2.1.33"/>
    </reaction>
</comment>
<comment type="cofactor">
    <cofactor evidence="1">
        <name>[4Fe-4S] cluster</name>
        <dbReference type="ChEBI" id="CHEBI:49883"/>
    </cofactor>
    <text evidence="1">Binds 1 [4Fe-4S] cluster per subunit.</text>
</comment>
<comment type="pathway">
    <text evidence="1">Amino-acid biosynthesis; L-leucine biosynthesis; L-leucine from 3-methyl-2-oxobutanoate: step 2/4.</text>
</comment>
<comment type="subunit">
    <text evidence="1">Heterodimer of LeuC and LeuD.</text>
</comment>
<comment type="similarity">
    <text evidence="1">Belongs to the aconitase/IPM isomerase family. LeuC type 1 subfamily.</text>
</comment>
<accession>Q9EVH7</accession>
<sequence length="442" mass="49266">MSKTLYQKIYDSHIVYEDKKNISVLYIDLHLIHEVTSPQAFDSLRNKKRKVRQPEKTFATMDHNVSTQKRDINASGSMAKKQMQQLIRNCDEFNISLYDINNPNQGIVHVIAPEKGMTLPGMIIVCGDSHTSTHGAFGALSFGIGTSEVEHVLATQTLKQQCFKNMKVEIVGDIPKFVTAKDIILFIIRRLGSSGGSGYVIEFCGNVIEKMSMEERMTVCNMAIEMGAKSGIIAPDETTYAYLKNKIYSPSGACWEXSISYWKTLKSDKDAFFDKCFTIDISNLAPQVTWGTSPDQVISINEKIPHYNEFNSITQKNSAKSALKYMGLNEGAYLTNISIDKVFIGSCTNARIEDLRSASKILKNRKISSNVKAIVVPGSGSVKQQAEREGLDKIFINSGFEWRLPGCSMCLGMNRDQLNIGERCASXSNRNFEGRQGRGGRT</sequence>
<name>LEUC_BUCUH</name>